<organism>
    <name type="scientific">Flavobacterium sp. (strain U-188)</name>
    <dbReference type="NCBI Taxonomy" id="242"/>
    <lineage>
        <taxon>Bacteria</taxon>
        <taxon>Pseudomonadati</taxon>
        <taxon>Bacteroidota</taxon>
        <taxon>Flavobacteriia</taxon>
        <taxon>Flavobacteriales</taxon>
        <taxon>Flavobacteriaceae</taxon>
        <taxon>Flavobacterium</taxon>
    </lineage>
</organism>
<reference key="1">
    <citation type="journal article" date="1990" name="Agric. Biol. Chem.">
        <title>Cloning and expression of the creatinase gene from Flavobacterium sp. U-188 in Escherichia coli.</title>
        <authorList>
            <person name="Koyama Y."/>
            <person name="Kitao S."/>
            <person name="Yamamoto-Otake H."/>
            <person name="Suzuki M."/>
            <person name="Nakano E."/>
        </authorList>
    </citation>
    <scope>NUCLEOTIDE SEQUENCE [GENOMIC DNA]</scope>
    <scope>PROTEIN SEQUENCE OF 1-15</scope>
</reference>
<reference key="2">
    <citation type="journal article" date="1993" name="J. Ferment. Bioeng.">
        <title>Molecular cloning and high expression of the Bacillus creatinase gene in Escherichia coli.</title>
        <authorList>
            <person name="Suzuki K."/>
            <person name="Sagai H."/>
            <person name="Sugiyama M."/>
            <person name="Imamura S."/>
        </authorList>
    </citation>
    <scope>NUCLEOTIDE SEQUENCE [GENOMIC DNA]</scope>
</reference>
<accession>P19213</accession>
<proteinExistence type="evidence at protein level"/>
<name>CREA_FLASU</name>
<evidence type="ECO:0000250" key="1"/>
<evidence type="ECO:0000305" key="2"/>
<keyword id="KW-0903">Direct protein sequencing</keyword>
<keyword id="KW-0378">Hydrolase</keyword>
<sequence length="403" mass="45780">MQMPKTLRIRNGEKVKSTFSAQEYANRHAKLRAHLAAENIDAAVFTSYHNINYYSDFLYCSFGRPYALVVTQDDVISISANIDGGQPWRRTVGTDNIVYTDWQRDNYFVAIQQALPRARRIGIEHDHLNLQNRDKLAARYPDAELVDVAAACMRMRMIKSAEEHEMIRHGARVADIGGAAIVEALRDQVPEYEVALHATQAMVRAIAETFDNVELMDTWTWFQSGINTDGAHNPVTTRKVNKGDILSLNCFPMIAGYYTALERTLFLDHCSDDHLRMWQANVEVHEAGLKLIKPGMRCSDIAKELNEIFLKHDLLQYRTFGYGHSFGTLSHYYGREAGLELREDIDTVLEPGMVVSMEPMIMLPEGRPGAGGYREHDILIVNENGAENITKFPYGPERNIIRK</sequence>
<protein>
    <recommendedName>
        <fullName>Creatinase</fullName>
        <ecNumber>3.5.3.3</ecNumber>
    </recommendedName>
    <alternativeName>
        <fullName>Creatine amidinohydrolase</fullName>
    </alternativeName>
</protein>
<comment type="catalytic activity">
    <reaction>
        <text>creatine + H2O = sarcosine + urea</text>
        <dbReference type="Rhea" id="RHEA:22456"/>
        <dbReference type="ChEBI" id="CHEBI:15377"/>
        <dbReference type="ChEBI" id="CHEBI:16199"/>
        <dbReference type="ChEBI" id="CHEBI:57433"/>
        <dbReference type="ChEBI" id="CHEBI:57947"/>
        <dbReference type="EC" id="3.5.3.3"/>
    </reaction>
</comment>
<comment type="subunit">
    <text evidence="1">Homodimer.</text>
</comment>
<comment type="similarity">
    <text evidence="2">Belongs to the peptidase M24 family. Creatinase subfamily.</text>
</comment>
<feature type="chain" id="PRO_0000079343" description="Creatinase">
    <location>
        <begin position="1"/>
        <end position="403"/>
    </location>
</feature>
<feature type="active site" evidence="1">
    <location>
        <position position="232"/>
    </location>
</feature>
<dbReference type="EC" id="3.5.3.3"/>
<dbReference type="EMBL" id="D00656">
    <property type="protein sequence ID" value="BAA32239.1"/>
    <property type="molecule type" value="Genomic_DNA"/>
</dbReference>
<dbReference type="EMBL" id="D14464">
    <property type="protein sequence ID" value="BAA03359.1"/>
    <property type="molecule type" value="Genomic_DNA"/>
</dbReference>
<dbReference type="PIR" id="JH0134">
    <property type="entry name" value="JH0134"/>
</dbReference>
<dbReference type="SMR" id="P19213"/>
<dbReference type="GO" id="GO:0016980">
    <property type="term" value="F:creatinase activity"/>
    <property type="evidence" value="ECO:0007669"/>
    <property type="project" value="UniProtKB-EC"/>
</dbReference>
<dbReference type="CDD" id="cd01090">
    <property type="entry name" value="Creatinase"/>
    <property type="match status" value="1"/>
</dbReference>
<dbReference type="Gene3D" id="3.90.230.10">
    <property type="entry name" value="Creatinase/methionine aminopeptidase superfamily"/>
    <property type="match status" value="1"/>
</dbReference>
<dbReference type="Gene3D" id="3.40.350.10">
    <property type="entry name" value="Creatinase/prolidase N-terminal domain"/>
    <property type="match status" value="1"/>
</dbReference>
<dbReference type="InterPro" id="IPR029149">
    <property type="entry name" value="Creatin/AminoP/Spt16_N"/>
</dbReference>
<dbReference type="InterPro" id="IPR036005">
    <property type="entry name" value="Creatinase/aminopeptidase-like"/>
</dbReference>
<dbReference type="InterPro" id="IPR039394">
    <property type="entry name" value="Creatinase_C"/>
</dbReference>
<dbReference type="InterPro" id="IPR000587">
    <property type="entry name" value="Creatinase_N"/>
</dbReference>
<dbReference type="InterPro" id="IPR000994">
    <property type="entry name" value="Pept_M24"/>
</dbReference>
<dbReference type="InterPro" id="IPR050659">
    <property type="entry name" value="Peptidase_M24B"/>
</dbReference>
<dbReference type="PANTHER" id="PTHR46112">
    <property type="entry name" value="AMINOPEPTIDASE"/>
    <property type="match status" value="1"/>
</dbReference>
<dbReference type="PANTHER" id="PTHR46112:SF2">
    <property type="entry name" value="XAA-PRO AMINOPEPTIDASE P-RELATED"/>
    <property type="match status" value="1"/>
</dbReference>
<dbReference type="Pfam" id="PF01321">
    <property type="entry name" value="Creatinase_N"/>
    <property type="match status" value="1"/>
</dbReference>
<dbReference type="Pfam" id="PF00557">
    <property type="entry name" value="Peptidase_M24"/>
    <property type="match status" value="1"/>
</dbReference>
<dbReference type="SUPFAM" id="SSF55920">
    <property type="entry name" value="Creatinase/aminopeptidase"/>
    <property type="match status" value="1"/>
</dbReference>
<dbReference type="SUPFAM" id="SSF53092">
    <property type="entry name" value="Creatinase/prolidase N-terminal domain"/>
    <property type="match status" value="1"/>
</dbReference>